<gene>
    <name type="primary">pgk</name>
    <name type="ordered locus">HP_1345</name>
</gene>
<organism>
    <name type="scientific">Helicobacter pylori (strain ATCC 700392 / 26695)</name>
    <name type="common">Campylobacter pylori</name>
    <dbReference type="NCBI Taxonomy" id="85962"/>
    <lineage>
        <taxon>Bacteria</taxon>
        <taxon>Pseudomonadati</taxon>
        <taxon>Campylobacterota</taxon>
        <taxon>Epsilonproteobacteria</taxon>
        <taxon>Campylobacterales</taxon>
        <taxon>Helicobacteraceae</taxon>
        <taxon>Helicobacter</taxon>
    </lineage>
</organism>
<name>PGK_HELPY</name>
<proteinExistence type="inferred from homology"/>
<reference key="1">
    <citation type="journal article" date="1997" name="Nature">
        <title>The complete genome sequence of the gastric pathogen Helicobacter pylori.</title>
        <authorList>
            <person name="Tomb J.-F."/>
            <person name="White O."/>
            <person name="Kerlavage A.R."/>
            <person name="Clayton R.A."/>
            <person name="Sutton G.G."/>
            <person name="Fleischmann R.D."/>
            <person name="Ketchum K.A."/>
            <person name="Klenk H.-P."/>
            <person name="Gill S.R."/>
            <person name="Dougherty B.A."/>
            <person name="Nelson K.E."/>
            <person name="Quackenbush J."/>
            <person name="Zhou L."/>
            <person name="Kirkness E.F."/>
            <person name="Peterson S.N."/>
            <person name="Loftus B.J."/>
            <person name="Richardson D.L."/>
            <person name="Dodson R.J."/>
            <person name="Khalak H.G."/>
            <person name="Glodek A."/>
            <person name="McKenney K."/>
            <person name="FitzGerald L.M."/>
            <person name="Lee N."/>
            <person name="Adams M.D."/>
            <person name="Hickey E.K."/>
            <person name="Berg D.E."/>
            <person name="Gocayne J.D."/>
            <person name="Utterback T.R."/>
            <person name="Peterson J.D."/>
            <person name="Kelley J.M."/>
            <person name="Cotton M.D."/>
            <person name="Weidman J.F."/>
            <person name="Fujii C."/>
            <person name="Bowman C."/>
            <person name="Watthey L."/>
            <person name="Wallin E."/>
            <person name="Hayes W.S."/>
            <person name="Borodovsky M."/>
            <person name="Karp P.D."/>
            <person name="Smith H.O."/>
            <person name="Fraser C.M."/>
            <person name="Venter J.C."/>
        </authorList>
    </citation>
    <scope>NUCLEOTIDE SEQUENCE [LARGE SCALE GENOMIC DNA]</scope>
    <source>
        <strain>ATCC 700392 / 26695</strain>
    </source>
</reference>
<protein>
    <recommendedName>
        <fullName>Phosphoglycerate kinase</fullName>
        <ecNumber>2.7.2.3</ecNumber>
    </recommendedName>
</protein>
<accession>P56154</accession>
<keyword id="KW-0067">ATP-binding</keyword>
<keyword id="KW-0963">Cytoplasm</keyword>
<keyword id="KW-0324">Glycolysis</keyword>
<keyword id="KW-0418">Kinase</keyword>
<keyword id="KW-0547">Nucleotide-binding</keyword>
<keyword id="KW-1185">Reference proteome</keyword>
<keyword id="KW-0808">Transferase</keyword>
<evidence type="ECO:0000250" key="1"/>
<evidence type="ECO:0000305" key="2"/>
<dbReference type="EC" id="2.7.2.3"/>
<dbReference type="EMBL" id="AE000511">
    <property type="protein sequence ID" value="AAD08386.1"/>
    <property type="molecule type" value="Genomic_DNA"/>
</dbReference>
<dbReference type="PIR" id="A64688">
    <property type="entry name" value="A64688"/>
</dbReference>
<dbReference type="RefSeq" id="NP_208137.1">
    <property type="nucleotide sequence ID" value="NC_000915.1"/>
</dbReference>
<dbReference type="RefSeq" id="WP_000880064.1">
    <property type="nucleotide sequence ID" value="NC_018939.1"/>
</dbReference>
<dbReference type="SMR" id="P56154"/>
<dbReference type="DIP" id="DIP-3617N"/>
<dbReference type="FunCoup" id="P56154">
    <property type="interactions" value="334"/>
</dbReference>
<dbReference type="IntAct" id="P56154">
    <property type="interactions" value="4"/>
</dbReference>
<dbReference type="MINT" id="P56154"/>
<dbReference type="STRING" id="85962.HP_1345"/>
<dbReference type="PaxDb" id="85962-C694_06940"/>
<dbReference type="EnsemblBacteria" id="AAD08386">
    <property type="protein sequence ID" value="AAD08386"/>
    <property type="gene ID" value="HP_1345"/>
</dbReference>
<dbReference type="KEGG" id="heo:C694_06940"/>
<dbReference type="KEGG" id="hpy:HP_1345"/>
<dbReference type="PATRIC" id="fig|85962.47.peg.1440"/>
<dbReference type="eggNOG" id="COG0126">
    <property type="taxonomic scope" value="Bacteria"/>
</dbReference>
<dbReference type="InParanoid" id="P56154"/>
<dbReference type="OrthoDB" id="9808460at2"/>
<dbReference type="PhylomeDB" id="P56154"/>
<dbReference type="UniPathway" id="UPA00109">
    <property type="reaction ID" value="UER00185"/>
</dbReference>
<dbReference type="Proteomes" id="UP000000429">
    <property type="component" value="Chromosome"/>
</dbReference>
<dbReference type="GO" id="GO:0005829">
    <property type="term" value="C:cytosol"/>
    <property type="evidence" value="ECO:0000318"/>
    <property type="project" value="GO_Central"/>
</dbReference>
<dbReference type="GO" id="GO:0043531">
    <property type="term" value="F:ADP binding"/>
    <property type="evidence" value="ECO:0000318"/>
    <property type="project" value="GO_Central"/>
</dbReference>
<dbReference type="GO" id="GO:0005524">
    <property type="term" value="F:ATP binding"/>
    <property type="evidence" value="ECO:0000318"/>
    <property type="project" value="GO_Central"/>
</dbReference>
<dbReference type="GO" id="GO:0004618">
    <property type="term" value="F:phosphoglycerate kinase activity"/>
    <property type="evidence" value="ECO:0000318"/>
    <property type="project" value="GO_Central"/>
</dbReference>
<dbReference type="GO" id="GO:0006094">
    <property type="term" value="P:gluconeogenesis"/>
    <property type="evidence" value="ECO:0000318"/>
    <property type="project" value="GO_Central"/>
</dbReference>
<dbReference type="GO" id="GO:0006096">
    <property type="term" value="P:glycolytic process"/>
    <property type="evidence" value="ECO:0000318"/>
    <property type="project" value="GO_Central"/>
</dbReference>
<dbReference type="FunFam" id="3.40.50.1260:FF:000011">
    <property type="entry name" value="Phosphoglycerate kinase"/>
    <property type="match status" value="1"/>
</dbReference>
<dbReference type="FunFam" id="3.40.50.1260:FF:000012">
    <property type="entry name" value="Phosphoglycerate kinase"/>
    <property type="match status" value="1"/>
</dbReference>
<dbReference type="Gene3D" id="3.40.50.1260">
    <property type="entry name" value="Phosphoglycerate kinase, N-terminal domain"/>
    <property type="match status" value="2"/>
</dbReference>
<dbReference type="HAMAP" id="MF_00145">
    <property type="entry name" value="Phosphoglyc_kinase"/>
    <property type="match status" value="1"/>
</dbReference>
<dbReference type="InterPro" id="IPR001576">
    <property type="entry name" value="Phosphoglycerate_kinase"/>
</dbReference>
<dbReference type="InterPro" id="IPR015911">
    <property type="entry name" value="Phosphoglycerate_kinase_CS"/>
</dbReference>
<dbReference type="InterPro" id="IPR015824">
    <property type="entry name" value="Phosphoglycerate_kinase_N"/>
</dbReference>
<dbReference type="InterPro" id="IPR036043">
    <property type="entry name" value="Phosphoglycerate_kinase_sf"/>
</dbReference>
<dbReference type="PANTHER" id="PTHR11406">
    <property type="entry name" value="PHOSPHOGLYCERATE KINASE"/>
    <property type="match status" value="1"/>
</dbReference>
<dbReference type="PANTHER" id="PTHR11406:SF23">
    <property type="entry name" value="PHOSPHOGLYCERATE KINASE 1, CHLOROPLASTIC-RELATED"/>
    <property type="match status" value="1"/>
</dbReference>
<dbReference type="Pfam" id="PF00162">
    <property type="entry name" value="PGK"/>
    <property type="match status" value="1"/>
</dbReference>
<dbReference type="PIRSF" id="PIRSF000724">
    <property type="entry name" value="Pgk"/>
    <property type="match status" value="1"/>
</dbReference>
<dbReference type="PRINTS" id="PR00477">
    <property type="entry name" value="PHGLYCKINASE"/>
</dbReference>
<dbReference type="SUPFAM" id="SSF53748">
    <property type="entry name" value="Phosphoglycerate kinase"/>
    <property type="match status" value="1"/>
</dbReference>
<dbReference type="PROSITE" id="PS00111">
    <property type="entry name" value="PGLYCERATE_KINASE"/>
    <property type="match status" value="1"/>
</dbReference>
<sequence length="402" mass="44772">MLAKMSFMQNVKNIQEVEVSHKRVLIRVDFNVPLDENLNITDDTRIRESLPTIQYCIDNKAKDIILVSHLGRPKGVEEKLSLKPFLKRLERLLNHEVVFSQNIVQLKQALNENAPTRIFLLENIRFLRGEEENDENLAKDLASLCDVFVNDAFGTSHRKHASTYGTAKFAPIKVSGFLLKKEIDSFYQAFNHPLRPLLLIVGGAKVSSKLTLLKNILDLIDKLIIAGAMSNTFLKALGYDVQDSSVEDALINDALELLQSAKEKKVKVYLPIDAVTTDDILNPKHIKISPVQDIEPKHKIADIGPASLKLFSEVIESAPTILWNGPLGVHEKQEFARGTTFLAHKIADTYAFSLIGGGDTIDAINRAGEKDNMSFISTGGGASLELLEGKILPCFEVLDKRH</sequence>
<feature type="chain" id="PRO_0000145950" description="Phosphoglycerate kinase">
    <location>
        <begin position="1"/>
        <end position="402"/>
    </location>
</feature>
<feature type="binding site" evidence="1">
    <location>
        <begin position="29"/>
        <end position="31"/>
    </location>
    <ligand>
        <name>substrate</name>
    </ligand>
</feature>
<feature type="binding site" evidence="1">
    <location>
        <position position="45"/>
    </location>
    <ligand>
        <name>substrate</name>
    </ligand>
</feature>
<feature type="binding site" evidence="1">
    <location>
        <begin position="69"/>
        <end position="72"/>
    </location>
    <ligand>
        <name>substrate</name>
    </ligand>
</feature>
<feature type="binding site" evidence="1">
    <location>
        <position position="125"/>
    </location>
    <ligand>
        <name>substrate</name>
    </ligand>
</feature>
<feature type="binding site" evidence="1">
    <location>
        <position position="158"/>
    </location>
    <ligand>
        <name>substrate</name>
    </ligand>
</feature>
<feature type="binding site" evidence="1">
    <location>
        <position position="209"/>
    </location>
    <ligand>
        <name>ATP</name>
        <dbReference type="ChEBI" id="CHEBI:30616"/>
    </ligand>
</feature>
<feature type="binding site" evidence="1">
    <location>
        <position position="331"/>
    </location>
    <ligand>
        <name>ATP</name>
        <dbReference type="ChEBI" id="CHEBI:30616"/>
    </ligand>
</feature>
<feature type="binding site" evidence="1">
    <location>
        <begin position="357"/>
        <end position="360"/>
    </location>
    <ligand>
        <name>ATP</name>
        <dbReference type="ChEBI" id="CHEBI:30616"/>
    </ligand>
</feature>
<comment type="catalytic activity">
    <reaction>
        <text>(2R)-3-phosphoglycerate + ATP = (2R)-3-phospho-glyceroyl phosphate + ADP</text>
        <dbReference type="Rhea" id="RHEA:14801"/>
        <dbReference type="ChEBI" id="CHEBI:30616"/>
        <dbReference type="ChEBI" id="CHEBI:57604"/>
        <dbReference type="ChEBI" id="CHEBI:58272"/>
        <dbReference type="ChEBI" id="CHEBI:456216"/>
        <dbReference type="EC" id="2.7.2.3"/>
    </reaction>
</comment>
<comment type="pathway">
    <text>Carbohydrate degradation; glycolysis; pyruvate from D-glyceraldehyde 3-phosphate: step 2/5.</text>
</comment>
<comment type="subcellular location">
    <subcellularLocation>
        <location evidence="2">Cytoplasm</location>
    </subcellularLocation>
</comment>
<comment type="similarity">
    <text evidence="2">Belongs to the phosphoglycerate kinase family.</text>
</comment>